<keyword id="KW-0221">Differentiation</keyword>
<keyword id="KW-0325">Glycoprotein</keyword>
<keyword id="KW-0357">Heparan sulfate</keyword>
<keyword id="KW-0472">Membrane</keyword>
<keyword id="KW-0524">Neurogenesis</keyword>
<keyword id="KW-0597">Phosphoprotein</keyword>
<keyword id="KW-0654">Proteoglycan</keyword>
<keyword id="KW-1185">Reference proteome</keyword>
<keyword id="KW-0732">Signal</keyword>
<keyword id="KW-0812">Transmembrane</keyword>
<keyword id="KW-1133">Transmembrane helix</keyword>
<reference key="1">
    <citation type="journal article" date="1993" name="Development">
        <title>Spatial and temporal changes in the expression of fibroglycan (syndecan-2) during mouse embryonic development.</title>
        <authorList>
            <person name="David G.J."/>
            <person name="Bai X.M."/>
            <person name="van der Schueren B."/>
            <person name="Marynen P."/>
            <person name="Cassiman J.-J."/>
            <person name="van den Berghe H."/>
        </authorList>
    </citation>
    <scope>NUCLEOTIDE SEQUENCE [MRNA]</scope>
    <source>
        <tissue>Embryo</tissue>
    </source>
</reference>
<reference key="2">
    <citation type="journal article" date="2005" name="Science">
        <title>The transcriptional landscape of the mammalian genome.</title>
        <authorList>
            <person name="Carninci P."/>
            <person name="Kasukawa T."/>
            <person name="Katayama S."/>
            <person name="Gough J."/>
            <person name="Frith M.C."/>
            <person name="Maeda N."/>
            <person name="Oyama R."/>
            <person name="Ravasi T."/>
            <person name="Lenhard B."/>
            <person name="Wells C."/>
            <person name="Kodzius R."/>
            <person name="Shimokawa K."/>
            <person name="Bajic V.B."/>
            <person name="Brenner S.E."/>
            <person name="Batalov S."/>
            <person name="Forrest A.R."/>
            <person name="Zavolan M."/>
            <person name="Davis M.J."/>
            <person name="Wilming L.G."/>
            <person name="Aidinis V."/>
            <person name="Allen J.E."/>
            <person name="Ambesi-Impiombato A."/>
            <person name="Apweiler R."/>
            <person name="Aturaliya R.N."/>
            <person name="Bailey T.L."/>
            <person name="Bansal M."/>
            <person name="Baxter L."/>
            <person name="Beisel K.W."/>
            <person name="Bersano T."/>
            <person name="Bono H."/>
            <person name="Chalk A.M."/>
            <person name="Chiu K.P."/>
            <person name="Choudhary V."/>
            <person name="Christoffels A."/>
            <person name="Clutterbuck D.R."/>
            <person name="Crowe M.L."/>
            <person name="Dalla E."/>
            <person name="Dalrymple B.P."/>
            <person name="de Bono B."/>
            <person name="Della Gatta G."/>
            <person name="di Bernardo D."/>
            <person name="Down T."/>
            <person name="Engstrom P."/>
            <person name="Fagiolini M."/>
            <person name="Faulkner G."/>
            <person name="Fletcher C.F."/>
            <person name="Fukushima T."/>
            <person name="Furuno M."/>
            <person name="Futaki S."/>
            <person name="Gariboldi M."/>
            <person name="Georgii-Hemming P."/>
            <person name="Gingeras T.R."/>
            <person name="Gojobori T."/>
            <person name="Green R.E."/>
            <person name="Gustincich S."/>
            <person name="Harbers M."/>
            <person name="Hayashi Y."/>
            <person name="Hensch T.K."/>
            <person name="Hirokawa N."/>
            <person name="Hill D."/>
            <person name="Huminiecki L."/>
            <person name="Iacono M."/>
            <person name="Ikeo K."/>
            <person name="Iwama A."/>
            <person name="Ishikawa T."/>
            <person name="Jakt M."/>
            <person name="Kanapin A."/>
            <person name="Katoh M."/>
            <person name="Kawasawa Y."/>
            <person name="Kelso J."/>
            <person name="Kitamura H."/>
            <person name="Kitano H."/>
            <person name="Kollias G."/>
            <person name="Krishnan S.P."/>
            <person name="Kruger A."/>
            <person name="Kummerfeld S.K."/>
            <person name="Kurochkin I.V."/>
            <person name="Lareau L.F."/>
            <person name="Lazarevic D."/>
            <person name="Lipovich L."/>
            <person name="Liu J."/>
            <person name="Liuni S."/>
            <person name="McWilliam S."/>
            <person name="Madan Babu M."/>
            <person name="Madera M."/>
            <person name="Marchionni L."/>
            <person name="Matsuda H."/>
            <person name="Matsuzawa S."/>
            <person name="Miki H."/>
            <person name="Mignone F."/>
            <person name="Miyake S."/>
            <person name="Morris K."/>
            <person name="Mottagui-Tabar S."/>
            <person name="Mulder N."/>
            <person name="Nakano N."/>
            <person name="Nakauchi H."/>
            <person name="Ng P."/>
            <person name="Nilsson R."/>
            <person name="Nishiguchi S."/>
            <person name="Nishikawa S."/>
            <person name="Nori F."/>
            <person name="Ohara O."/>
            <person name="Okazaki Y."/>
            <person name="Orlando V."/>
            <person name="Pang K.C."/>
            <person name="Pavan W.J."/>
            <person name="Pavesi G."/>
            <person name="Pesole G."/>
            <person name="Petrovsky N."/>
            <person name="Piazza S."/>
            <person name="Reed J."/>
            <person name="Reid J.F."/>
            <person name="Ring B.Z."/>
            <person name="Ringwald M."/>
            <person name="Rost B."/>
            <person name="Ruan Y."/>
            <person name="Salzberg S.L."/>
            <person name="Sandelin A."/>
            <person name="Schneider C."/>
            <person name="Schoenbach C."/>
            <person name="Sekiguchi K."/>
            <person name="Semple C.A."/>
            <person name="Seno S."/>
            <person name="Sessa L."/>
            <person name="Sheng Y."/>
            <person name="Shibata Y."/>
            <person name="Shimada H."/>
            <person name="Shimada K."/>
            <person name="Silva D."/>
            <person name="Sinclair B."/>
            <person name="Sperling S."/>
            <person name="Stupka E."/>
            <person name="Sugiura K."/>
            <person name="Sultana R."/>
            <person name="Takenaka Y."/>
            <person name="Taki K."/>
            <person name="Tammoja K."/>
            <person name="Tan S.L."/>
            <person name="Tang S."/>
            <person name="Taylor M.S."/>
            <person name="Tegner J."/>
            <person name="Teichmann S.A."/>
            <person name="Ueda H.R."/>
            <person name="van Nimwegen E."/>
            <person name="Verardo R."/>
            <person name="Wei C.L."/>
            <person name="Yagi K."/>
            <person name="Yamanishi H."/>
            <person name="Zabarovsky E."/>
            <person name="Zhu S."/>
            <person name="Zimmer A."/>
            <person name="Hide W."/>
            <person name="Bult C."/>
            <person name="Grimmond S.M."/>
            <person name="Teasdale R.D."/>
            <person name="Liu E.T."/>
            <person name="Brusic V."/>
            <person name="Quackenbush J."/>
            <person name="Wahlestedt C."/>
            <person name="Mattick J.S."/>
            <person name="Hume D.A."/>
            <person name="Kai C."/>
            <person name="Sasaki D."/>
            <person name="Tomaru Y."/>
            <person name="Fukuda S."/>
            <person name="Kanamori-Katayama M."/>
            <person name="Suzuki M."/>
            <person name="Aoki J."/>
            <person name="Arakawa T."/>
            <person name="Iida J."/>
            <person name="Imamura K."/>
            <person name="Itoh M."/>
            <person name="Kato T."/>
            <person name="Kawaji H."/>
            <person name="Kawagashira N."/>
            <person name="Kawashima T."/>
            <person name="Kojima M."/>
            <person name="Kondo S."/>
            <person name="Konno H."/>
            <person name="Nakano K."/>
            <person name="Ninomiya N."/>
            <person name="Nishio T."/>
            <person name="Okada M."/>
            <person name="Plessy C."/>
            <person name="Shibata K."/>
            <person name="Shiraki T."/>
            <person name="Suzuki S."/>
            <person name="Tagami M."/>
            <person name="Waki K."/>
            <person name="Watahiki A."/>
            <person name="Okamura-Oho Y."/>
            <person name="Suzuki H."/>
            <person name="Kawai J."/>
            <person name="Hayashizaki Y."/>
        </authorList>
    </citation>
    <scope>NUCLEOTIDE SEQUENCE [LARGE SCALE MRNA]</scope>
    <source>
        <strain>C57BL/6J</strain>
        <tissue>Liver</tissue>
    </source>
</reference>
<reference key="3">
    <citation type="journal article" date="2004" name="Genome Res.">
        <title>The status, quality, and expansion of the NIH full-length cDNA project: the Mammalian Gene Collection (MGC).</title>
        <authorList>
            <consortium name="The MGC Project Team"/>
        </authorList>
    </citation>
    <scope>NUCLEOTIDE SEQUENCE [LARGE SCALE MRNA]</scope>
    <source>
        <strain>FVB/N</strain>
        <tissue>Colon</tissue>
    </source>
</reference>
<reference key="4">
    <citation type="journal article" date="1996" name="Biochem. J.">
        <title>Phosphorylation of a membrane-intercalated proteoglycan, syndecan-2, expressed in a stroma-inducing clone from a mouse Lewis lung carcinoma.</title>
        <authorList>
            <person name="Itano N."/>
            <person name="Oguri K."/>
            <person name="Nagayasu Y."/>
            <person name="Kusano Y."/>
            <person name="Nakanishi H."/>
            <person name="David G."/>
            <person name="Okayama M."/>
        </authorList>
    </citation>
    <scope>GLYCOSYLATION</scope>
    <scope>PHOSPHORYLATION</scope>
</reference>
<reference key="5">
    <citation type="journal article" date="2011" name="J. Cell Biol.">
        <title>Sarm1, a negative regulator of innate immunity, interacts with syndecan-2 and regulates neuronal morphology.</title>
        <authorList>
            <person name="Chen C.Y."/>
            <person name="Lin C.W."/>
            <person name="Chang C.Y."/>
            <person name="Jiang S.T."/>
            <person name="Hsueh Y.P."/>
        </authorList>
    </citation>
    <scope>FUNCTION</scope>
    <scope>INTERACTION WITH SARM1</scope>
</reference>
<accession>P43407</accession>
<protein>
    <recommendedName>
        <fullName>Syndecan-2</fullName>
        <shortName>SYND2</shortName>
    </recommendedName>
    <alternativeName>
        <fullName>Fibroglycan</fullName>
    </alternativeName>
    <alternativeName>
        <fullName>Heparan sulfate proteoglycan core protein</fullName>
        <shortName>HSPG</shortName>
    </alternativeName>
    <cdAntigenName>CD362</cdAntigenName>
</protein>
<feature type="signal peptide" evidence="2">
    <location>
        <begin position="1"/>
        <end position="18"/>
    </location>
</feature>
<feature type="chain" id="PRO_0000033504" description="Syndecan-2">
    <location>
        <begin position="19"/>
        <end position="202"/>
    </location>
</feature>
<feature type="topological domain" description="Extracellular" evidence="2">
    <location>
        <begin position="19"/>
        <end position="145"/>
    </location>
</feature>
<feature type="transmembrane region" description="Helical" evidence="2">
    <location>
        <begin position="146"/>
        <end position="170"/>
    </location>
</feature>
<feature type="topological domain" description="Cytoplasmic" evidence="2">
    <location>
        <begin position="171"/>
        <end position="202"/>
    </location>
</feature>
<feature type="region of interest" description="Disordered" evidence="3">
    <location>
        <begin position="41"/>
        <end position="63"/>
    </location>
</feature>
<feature type="region of interest" description="Disordered" evidence="3">
    <location>
        <begin position="88"/>
        <end position="118"/>
    </location>
</feature>
<feature type="region of interest" description="Disordered" evidence="3">
    <location>
        <begin position="179"/>
        <end position="202"/>
    </location>
</feature>
<feature type="compositionally biased region" description="Polar residues" evidence="3">
    <location>
        <begin position="91"/>
        <end position="103"/>
    </location>
</feature>
<feature type="compositionally biased region" description="Acidic residues" evidence="3">
    <location>
        <begin position="104"/>
        <end position="117"/>
    </location>
</feature>
<feature type="site" description="Cleavage of ectodomain" evidence="2">
    <location>
        <begin position="143"/>
        <end position="144"/>
    </location>
</feature>
<feature type="modified residue" description="Phosphoserine" evidence="1">
    <location>
        <position position="116"/>
    </location>
</feature>
<feature type="modified residue" description="Phosphoserine" evidence="1">
    <location>
        <position position="188"/>
    </location>
</feature>
<feature type="glycosylation site" description="O-linked (Xyl...) (glycosaminoglycan) serine" evidence="2">
    <location>
        <position position="41"/>
    </location>
</feature>
<feature type="glycosylation site" description="O-linked (Xyl...) (glycosaminoglycan) serine" evidence="2">
    <location>
        <position position="55"/>
    </location>
</feature>
<feature type="glycosylation site" description="O-linked (Xyl...) (glycosaminoglycan) serine" evidence="2">
    <location>
        <position position="57"/>
    </location>
</feature>
<organism>
    <name type="scientific">Mus musculus</name>
    <name type="common">Mouse</name>
    <dbReference type="NCBI Taxonomy" id="10090"/>
    <lineage>
        <taxon>Eukaryota</taxon>
        <taxon>Metazoa</taxon>
        <taxon>Chordata</taxon>
        <taxon>Craniata</taxon>
        <taxon>Vertebrata</taxon>
        <taxon>Euteleostomi</taxon>
        <taxon>Mammalia</taxon>
        <taxon>Eutheria</taxon>
        <taxon>Euarchontoglires</taxon>
        <taxon>Glires</taxon>
        <taxon>Rodentia</taxon>
        <taxon>Myomorpha</taxon>
        <taxon>Muroidea</taxon>
        <taxon>Muridae</taxon>
        <taxon>Murinae</taxon>
        <taxon>Mus</taxon>
        <taxon>Mus</taxon>
    </lineage>
</organism>
<evidence type="ECO:0000250" key="1">
    <source>
        <dbReference type="UniProtKB" id="P34741"/>
    </source>
</evidence>
<evidence type="ECO:0000255" key="2"/>
<evidence type="ECO:0000256" key="3">
    <source>
        <dbReference type="SAM" id="MobiDB-lite"/>
    </source>
</evidence>
<evidence type="ECO:0000269" key="4">
    <source>
    </source>
</evidence>
<evidence type="ECO:0000269" key="5">
    <source>
    </source>
</evidence>
<evidence type="ECO:0000305" key="6"/>
<dbReference type="EMBL" id="U00674">
    <property type="protein sequence ID" value="AAA17781.1"/>
    <property type="molecule type" value="mRNA"/>
</dbReference>
<dbReference type="EMBL" id="AK011042">
    <property type="protein sequence ID" value="BAB27354.1"/>
    <property type="molecule type" value="mRNA"/>
</dbReference>
<dbReference type="EMBL" id="BC047144">
    <property type="protein sequence ID" value="AAH47144.1"/>
    <property type="molecule type" value="mRNA"/>
</dbReference>
<dbReference type="CCDS" id="CCDS27413.1"/>
<dbReference type="PIR" id="I53137">
    <property type="entry name" value="I53137"/>
</dbReference>
<dbReference type="RefSeq" id="NP_032330.1">
    <property type="nucleotide sequence ID" value="NM_008304.2"/>
</dbReference>
<dbReference type="SMR" id="P43407"/>
<dbReference type="BioGRID" id="200460">
    <property type="interactions" value="1"/>
</dbReference>
<dbReference type="CORUM" id="P43407"/>
<dbReference type="FunCoup" id="P43407">
    <property type="interactions" value="453"/>
</dbReference>
<dbReference type="IntAct" id="P43407">
    <property type="interactions" value="1"/>
</dbReference>
<dbReference type="STRING" id="10090.ENSMUSP00000022871"/>
<dbReference type="GlyCosmos" id="P43407">
    <property type="glycosylation" value="3 sites, No reported glycans"/>
</dbReference>
<dbReference type="GlyGen" id="P43407">
    <property type="glycosylation" value="3 sites"/>
</dbReference>
<dbReference type="iPTMnet" id="P43407"/>
<dbReference type="PhosphoSitePlus" id="P43407"/>
<dbReference type="PaxDb" id="10090-ENSMUSP00000022871"/>
<dbReference type="PeptideAtlas" id="P43407"/>
<dbReference type="ProteomicsDB" id="256718"/>
<dbReference type="Pumba" id="P43407"/>
<dbReference type="Antibodypedia" id="25987">
    <property type="antibodies" value="286 antibodies from 31 providers"/>
</dbReference>
<dbReference type="DNASU" id="15529"/>
<dbReference type="Ensembl" id="ENSMUST00000022871.7">
    <property type="protein sequence ID" value="ENSMUSP00000022871.6"/>
    <property type="gene ID" value="ENSMUSG00000022261.7"/>
</dbReference>
<dbReference type="GeneID" id="15529"/>
<dbReference type="KEGG" id="mmu:15529"/>
<dbReference type="UCSC" id="uc007vkx.1">
    <property type="organism name" value="mouse"/>
</dbReference>
<dbReference type="AGR" id="MGI:1349165"/>
<dbReference type="CTD" id="6383"/>
<dbReference type="MGI" id="MGI:1349165">
    <property type="gene designation" value="Sdc2"/>
</dbReference>
<dbReference type="VEuPathDB" id="HostDB:ENSMUSG00000022261"/>
<dbReference type="eggNOG" id="ENOG502RZ6V">
    <property type="taxonomic scope" value="Eukaryota"/>
</dbReference>
<dbReference type="GeneTree" id="ENSGT00940000157222"/>
<dbReference type="HOGENOM" id="CLU_046599_2_1_1"/>
<dbReference type="InParanoid" id="P43407"/>
<dbReference type="OMA" id="ASASGSX"/>
<dbReference type="OrthoDB" id="10044468at2759"/>
<dbReference type="PhylomeDB" id="P43407"/>
<dbReference type="TreeFam" id="TF320463"/>
<dbReference type="Reactome" id="R-MMU-1971475">
    <property type="pathway name" value="A tetrasaccharide linker sequence is required for GAG synthesis"/>
</dbReference>
<dbReference type="Reactome" id="R-MMU-2022928">
    <property type="pathway name" value="HS-GAG biosynthesis"/>
</dbReference>
<dbReference type="Reactome" id="R-MMU-2024096">
    <property type="pathway name" value="HS-GAG degradation"/>
</dbReference>
<dbReference type="Reactome" id="R-MMU-202733">
    <property type="pathway name" value="Cell surface interactions at the vascular wall"/>
</dbReference>
<dbReference type="Reactome" id="R-MMU-3000170">
    <property type="pathway name" value="Syndecan interactions"/>
</dbReference>
<dbReference type="Reactome" id="R-MMU-381426">
    <property type="pathway name" value="Regulation of Insulin-like Growth Factor (IGF) transport and uptake by Insulin-like Growth Factor Binding Proteins (IGFBPs)"/>
</dbReference>
<dbReference type="Reactome" id="R-MMU-3928662">
    <property type="pathway name" value="EPHB-mediated forward signaling"/>
</dbReference>
<dbReference type="Reactome" id="R-MMU-8957275">
    <property type="pathway name" value="Post-translational protein phosphorylation"/>
</dbReference>
<dbReference type="Reactome" id="R-MMU-975634">
    <property type="pathway name" value="Retinoid metabolism and transport"/>
</dbReference>
<dbReference type="BioGRID-ORCS" id="15529">
    <property type="hits" value="2 hits in 76 CRISPR screens"/>
</dbReference>
<dbReference type="ChiTaRS" id="Sdc2">
    <property type="organism name" value="mouse"/>
</dbReference>
<dbReference type="PRO" id="PR:P43407"/>
<dbReference type="Proteomes" id="UP000000589">
    <property type="component" value="Chromosome 15"/>
</dbReference>
<dbReference type="RNAct" id="P43407">
    <property type="molecule type" value="protein"/>
</dbReference>
<dbReference type="Bgee" id="ENSMUSG00000022261">
    <property type="expression patterns" value="Expressed in epithelium of lens and 254 other cell types or tissues"/>
</dbReference>
<dbReference type="GO" id="GO:0005796">
    <property type="term" value="C:Golgi lumen"/>
    <property type="evidence" value="ECO:0000304"/>
    <property type="project" value="Reactome"/>
</dbReference>
<dbReference type="GO" id="GO:0005886">
    <property type="term" value="C:plasma membrane"/>
    <property type="evidence" value="ECO:0007669"/>
    <property type="project" value="Ensembl"/>
</dbReference>
<dbReference type="GO" id="GO:0042802">
    <property type="term" value="F:identical protein binding"/>
    <property type="evidence" value="ECO:0007669"/>
    <property type="project" value="Ensembl"/>
</dbReference>
<dbReference type="GO" id="GO:0030165">
    <property type="term" value="F:PDZ domain binding"/>
    <property type="evidence" value="ECO:0007669"/>
    <property type="project" value="Ensembl"/>
</dbReference>
<dbReference type="GO" id="GO:0030154">
    <property type="term" value="P:cell differentiation"/>
    <property type="evidence" value="ECO:0007669"/>
    <property type="project" value="UniProtKB-KW"/>
</dbReference>
<dbReference type="GO" id="GO:0007399">
    <property type="term" value="P:nervous system development"/>
    <property type="evidence" value="ECO:0007669"/>
    <property type="project" value="UniProtKB-KW"/>
</dbReference>
<dbReference type="GO" id="GO:0048814">
    <property type="term" value="P:regulation of dendrite morphogenesis"/>
    <property type="evidence" value="ECO:0000315"/>
    <property type="project" value="UniProtKB"/>
</dbReference>
<dbReference type="InterPro" id="IPR003585">
    <property type="entry name" value="Neurexin-like"/>
</dbReference>
<dbReference type="InterPro" id="IPR001050">
    <property type="entry name" value="Syndecan"/>
</dbReference>
<dbReference type="InterPro" id="IPR027789">
    <property type="entry name" value="Syndecan/Neurexin_dom"/>
</dbReference>
<dbReference type="InterPro" id="IPR030479">
    <property type="entry name" value="Syndecan_CS"/>
</dbReference>
<dbReference type="PANTHER" id="PTHR10915">
    <property type="entry name" value="SYNDECAN"/>
    <property type="match status" value="1"/>
</dbReference>
<dbReference type="PANTHER" id="PTHR10915:SF6">
    <property type="entry name" value="SYNDECAN-2"/>
    <property type="match status" value="1"/>
</dbReference>
<dbReference type="Pfam" id="PF01034">
    <property type="entry name" value="Syndecan"/>
    <property type="match status" value="1"/>
</dbReference>
<dbReference type="SMART" id="SM00294">
    <property type="entry name" value="4.1m"/>
    <property type="match status" value="1"/>
</dbReference>
<dbReference type="PROSITE" id="PS00964">
    <property type="entry name" value="SYNDECAN"/>
    <property type="match status" value="1"/>
</dbReference>
<name>SDC2_MOUSE</name>
<sequence>MQRAWILLTLGLMACVSAETRTELTSDKDMYLDNSSIEEASGVYPIDDDDYSSASGSGADEDIESPVLTTSQLIPRIPLTSAASPKVETMTLKTQSITPAQTESPEETDKEEVDISEAEEKLGPAIKSTDVYTEKHSDNLFKRTEVLAAVIAGGVIGFLFAIFLILLLVYRMRKKDEGSYDLGERKPSSAAYQKAPTKEFYA</sequence>
<comment type="function">
    <text evidence="4">Cell surface proteoglycan which regulates dendritic arbor morphogenesis.</text>
</comment>
<comment type="subunit">
    <text evidence="1 4">Interacts (via cytoplasmic domain) with SARM1 (PubMed:21555464). Forms a complex with SDCBP and PDCD6IP (By similarity).</text>
</comment>
<comment type="interaction">
    <interactant intactId="EBI-11578890">
        <id>P43407</id>
    </interactant>
    <interactant intactId="EBI-8869614">
        <id>Q15113</id>
        <label>PCOLCE</label>
    </interactant>
    <organismsDiffer>true</organismsDiffer>
    <experiments>4</experiments>
</comment>
<comment type="subcellular location">
    <subcellularLocation>
        <location>Membrane</location>
        <topology>Single-pass type I membrane protein</topology>
    </subcellularLocation>
</comment>
<comment type="tissue specificity">
    <text>Preferential expression in cells of mesenchymal origin.</text>
</comment>
<comment type="PTM">
    <text evidence="5">O-glycosylated; contains both heparan sulfate and chondroitin sulfate.</text>
</comment>
<comment type="PTM">
    <text evidence="5">Phosphorylated on serine residues.</text>
</comment>
<comment type="similarity">
    <text evidence="6">Belongs to the syndecan proteoglycan family.</text>
</comment>
<gene>
    <name type="primary">Sdc2</name>
    <name type="synonym">Hspg1</name>
    <name type="synonym">Synd2</name>
</gene>
<proteinExistence type="evidence at protein level"/>